<keyword id="KW-0963">Cytoplasm</keyword>
<keyword id="KW-0507">mRNA processing</keyword>
<keyword id="KW-0508">mRNA splicing</keyword>
<keyword id="KW-0539">Nucleus</keyword>
<keyword id="KW-1185">Reference proteome</keyword>
<keyword id="KW-0747">Spliceosome</keyword>
<accession>Q0P4A6</accession>
<proteinExistence type="evidence at transcript level"/>
<organism>
    <name type="scientific">Danio rerio</name>
    <name type="common">Zebrafish</name>
    <name type="synonym">Brachydanio rerio</name>
    <dbReference type="NCBI Taxonomy" id="7955"/>
    <lineage>
        <taxon>Eukaryota</taxon>
        <taxon>Metazoa</taxon>
        <taxon>Chordata</taxon>
        <taxon>Craniata</taxon>
        <taxon>Vertebrata</taxon>
        <taxon>Euteleostomi</taxon>
        <taxon>Actinopterygii</taxon>
        <taxon>Neopterygii</taxon>
        <taxon>Teleostei</taxon>
        <taxon>Ostariophysi</taxon>
        <taxon>Cypriniformes</taxon>
        <taxon>Danionidae</taxon>
        <taxon>Danioninae</taxon>
        <taxon>Danio</taxon>
    </lineage>
</organism>
<comment type="function">
    <text evidence="1">Protein associated with the U5 snRNP, during its maturation and its post-splicing recycling and which is required for spliceosomal tri-snRNP complex assembly in the nucleus. Has a molecular sequestering activity and transiently hinders SNRNP200 binding sites for constitutive splicing factors that intervene later during the assembly of the spliceosome and splicing. Together with its molecular sequestering activity, may also function as a molecular adapter and placeholder, coordinating the assembly of the U5 snRNP and its association with the U4/U6 di-snRNP.</text>
</comment>
<comment type="subunit">
    <text evidence="1">Interacts in a RNA-independent manner with distinct U5 snRNP-containing complexes, the mono-U5 snRNP and the post-splicing U5 snRNP-PRPF19 complex.</text>
</comment>
<comment type="subcellular location">
    <subcellularLocation>
        <location evidence="1">Nucleus</location>
    </subcellularLocation>
    <subcellularLocation>
        <location evidence="1">Cytoplasm</location>
    </subcellularLocation>
</comment>
<comment type="similarity">
    <text evidence="3">Belongs to the TSSC4 family.</text>
</comment>
<sequence length="306" mass="34139">MSDRKRKGNDAPNSLSNRDTVELPDDLSLSDSDSDEPLESFGRKIEDLSSSSEEEGETRQQVQSVLQENPSFRLTGGSSSFCDRSRDIFAQLDSAAKLTSKDLGEDNILDGTLARPAPPSPPHAVQNKCGVGQELTKKQPPGKKLPDYLAHPERWTHYSLEDIDETSDKKNSQVAHEYIRELQDSKRSQKAALETFTPAFNQDHGSSNENKIVFAKPKSKDQSGSRADHAKKEEVGLQHLDDRVEADEGEALQQSSSWPNKEKKRKWGVTKEEDDTVAPSAVFTSSKRVNRKNFRKTPDDNDGDKE</sequence>
<dbReference type="EMBL" id="BC122196">
    <property type="protein sequence ID" value="AAI22197.1"/>
    <property type="molecule type" value="mRNA"/>
</dbReference>
<dbReference type="RefSeq" id="NP_001039313.1">
    <property type="nucleotide sequence ID" value="NM_001045848.1"/>
</dbReference>
<dbReference type="BioGRID" id="285954">
    <property type="interactions" value="1"/>
</dbReference>
<dbReference type="FunCoup" id="Q0P4A6">
    <property type="interactions" value="191"/>
</dbReference>
<dbReference type="STRING" id="7955.ENSDARP00000069747"/>
<dbReference type="PaxDb" id="7955-ENSDARP00000069747"/>
<dbReference type="GeneID" id="559769"/>
<dbReference type="KEGG" id="dre:559769"/>
<dbReference type="AGR" id="ZFIN:ZDB-GENE-060825-263"/>
<dbReference type="CTD" id="10078"/>
<dbReference type="ZFIN" id="ZDB-GENE-060825-263">
    <property type="gene designation" value="tssc4"/>
</dbReference>
<dbReference type="eggNOG" id="ENOG502S07M">
    <property type="taxonomic scope" value="Eukaryota"/>
</dbReference>
<dbReference type="InParanoid" id="Q0P4A6"/>
<dbReference type="OrthoDB" id="1906282at2759"/>
<dbReference type="PhylomeDB" id="Q0P4A6"/>
<dbReference type="PRO" id="PR:Q0P4A6"/>
<dbReference type="Proteomes" id="UP000000437">
    <property type="component" value="Chromosome 7"/>
</dbReference>
<dbReference type="GO" id="GO:0005737">
    <property type="term" value="C:cytoplasm"/>
    <property type="evidence" value="ECO:0000250"/>
    <property type="project" value="UniProtKB"/>
</dbReference>
<dbReference type="GO" id="GO:0005634">
    <property type="term" value="C:nucleus"/>
    <property type="evidence" value="ECO:0000250"/>
    <property type="project" value="UniProtKB"/>
</dbReference>
<dbReference type="GO" id="GO:0005681">
    <property type="term" value="C:spliceosomal complex"/>
    <property type="evidence" value="ECO:0007669"/>
    <property type="project" value="UniProtKB-KW"/>
</dbReference>
<dbReference type="GO" id="GO:0005682">
    <property type="term" value="C:U5 snRNP"/>
    <property type="evidence" value="ECO:0000250"/>
    <property type="project" value="UniProtKB"/>
</dbReference>
<dbReference type="GO" id="GO:0140313">
    <property type="term" value="F:molecular sequestering activity"/>
    <property type="evidence" value="ECO:0000250"/>
    <property type="project" value="UniProtKB"/>
</dbReference>
<dbReference type="GO" id="GO:0000387">
    <property type="term" value="P:spliceosomal snRNP assembly"/>
    <property type="evidence" value="ECO:0000250"/>
    <property type="project" value="UniProtKB"/>
</dbReference>
<dbReference type="GO" id="GO:0000244">
    <property type="term" value="P:spliceosomal tri-snRNP complex assembly"/>
    <property type="evidence" value="ECO:0000250"/>
    <property type="project" value="UniProtKB"/>
</dbReference>
<dbReference type="InterPro" id="IPR029338">
    <property type="entry name" value="TSSC4"/>
</dbReference>
<dbReference type="PANTHER" id="PTHR13445">
    <property type="entry name" value="TUMOR SUPPRESSING SUBTRANSFERABLE CANDIDATE 4 TSSC4"/>
    <property type="match status" value="1"/>
</dbReference>
<dbReference type="PANTHER" id="PTHR13445:SF3">
    <property type="entry name" value="U5 SMALL NUCLEAR RIBONUCLEOPROTEIN TSSC4"/>
    <property type="match status" value="1"/>
</dbReference>
<dbReference type="Pfam" id="PF15264">
    <property type="entry name" value="TSSC4"/>
    <property type="match status" value="1"/>
</dbReference>
<feature type="chain" id="PRO_0000359593" description="U5 small nuclear ribonucleoprotein TSSC4">
    <location>
        <begin position="1"/>
        <end position="306"/>
    </location>
</feature>
<feature type="region of interest" description="Disordered" evidence="2">
    <location>
        <begin position="1"/>
        <end position="81"/>
    </location>
</feature>
<feature type="region of interest" description="Disordered" evidence="2">
    <location>
        <begin position="109"/>
        <end position="128"/>
    </location>
</feature>
<feature type="region of interest" description="Disordered" evidence="2">
    <location>
        <begin position="182"/>
        <end position="306"/>
    </location>
</feature>
<feature type="compositionally biased region" description="Polar residues" evidence="2">
    <location>
        <begin position="59"/>
        <end position="81"/>
    </location>
</feature>
<feature type="compositionally biased region" description="Polar residues" evidence="2">
    <location>
        <begin position="198"/>
        <end position="210"/>
    </location>
</feature>
<feature type="compositionally biased region" description="Basic and acidic residues" evidence="2">
    <location>
        <begin position="218"/>
        <end position="243"/>
    </location>
</feature>
<feature type="compositionally biased region" description="Basic and acidic residues" evidence="2">
    <location>
        <begin position="296"/>
        <end position="306"/>
    </location>
</feature>
<name>TSSC4_DANRE</name>
<evidence type="ECO:0000250" key="1">
    <source>
        <dbReference type="UniProtKB" id="Q9Y5U2"/>
    </source>
</evidence>
<evidence type="ECO:0000256" key="2">
    <source>
        <dbReference type="SAM" id="MobiDB-lite"/>
    </source>
</evidence>
<evidence type="ECO:0000305" key="3"/>
<reference key="1">
    <citation type="submission" date="2006-08" db="EMBL/GenBank/DDBJ databases">
        <authorList>
            <consortium name="NIH - Zebrafish Gene Collection (ZGC) project"/>
        </authorList>
    </citation>
    <scope>NUCLEOTIDE SEQUENCE [LARGE SCALE MRNA]</scope>
    <source>
        <tissue>Embryo</tissue>
    </source>
</reference>
<gene>
    <name type="primary">tssc4</name>
    <name type="ORF">zgc:153225</name>
</gene>
<protein>
    <recommendedName>
        <fullName evidence="1">U5 small nuclear ribonucleoprotein TSSC4</fullName>
    </recommendedName>
</protein>